<gene>
    <name type="ordered locus">VP0969</name>
</gene>
<comment type="similarity">
    <text evidence="1">Belongs to the UPF0227 family.</text>
</comment>
<reference key="1">
    <citation type="journal article" date="2003" name="Lancet">
        <title>Genome sequence of Vibrio parahaemolyticus: a pathogenic mechanism distinct from that of V. cholerae.</title>
        <authorList>
            <person name="Makino K."/>
            <person name="Oshima K."/>
            <person name="Kurokawa K."/>
            <person name="Yokoyama K."/>
            <person name="Uda T."/>
            <person name="Tagomori K."/>
            <person name="Iijima Y."/>
            <person name="Najima M."/>
            <person name="Nakano M."/>
            <person name="Yamashita A."/>
            <person name="Kubota Y."/>
            <person name="Kimura S."/>
            <person name="Yasunaga T."/>
            <person name="Honda T."/>
            <person name="Shinagawa H."/>
            <person name="Hattori M."/>
            <person name="Iida T."/>
        </authorList>
    </citation>
    <scope>NUCLEOTIDE SEQUENCE [LARGE SCALE GENOMIC DNA]</scope>
    <source>
        <strain>RIMD 2210633</strain>
    </source>
</reference>
<feature type="chain" id="PRO_0000070326" description="UPF0227 protein VP0969">
    <location>
        <begin position="1"/>
        <end position="179"/>
    </location>
</feature>
<organism>
    <name type="scientific">Vibrio parahaemolyticus serotype O3:K6 (strain RIMD 2210633)</name>
    <dbReference type="NCBI Taxonomy" id="223926"/>
    <lineage>
        <taxon>Bacteria</taxon>
        <taxon>Pseudomonadati</taxon>
        <taxon>Pseudomonadota</taxon>
        <taxon>Gammaproteobacteria</taxon>
        <taxon>Vibrionales</taxon>
        <taxon>Vibrionaceae</taxon>
        <taxon>Vibrio</taxon>
    </lineage>
</organism>
<accession>Q87R29</accession>
<name>Y969_VIBPA</name>
<protein>
    <recommendedName>
        <fullName evidence="1">UPF0227 protein VP0969</fullName>
    </recommendedName>
</protein>
<proteinExistence type="inferred from homology"/>
<dbReference type="EMBL" id="BA000031">
    <property type="protein sequence ID" value="BAC59232.1"/>
    <property type="molecule type" value="Genomic_DNA"/>
</dbReference>
<dbReference type="RefSeq" id="NP_797348.1">
    <property type="nucleotide sequence ID" value="NC_004603.1"/>
</dbReference>
<dbReference type="SMR" id="Q87R29"/>
<dbReference type="ESTHER" id="vibpa-y969">
    <property type="family name" value="abh_upf00227"/>
</dbReference>
<dbReference type="GeneID" id="1188473"/>
<dbReference type="KEGG" id="vpa:VP0969"/>
<dbReference type="PATRIC" id="fig|223926.6.peg.920"/>
<dbReference type="eggNOG" id="COG3150">
    <property type="taxonomic scope" value="Bacteria"/>
</dbReference>
<dbReference type="HOGENOM" id="CLU_128769_0_0_6"/>
<dbReference type="Proteomes" id="UP000002493">
    <property type="component" value="Chromosome 1"/>
</dbReference>
<dbReference type="Gene3D" id="3.40.50.1820">
    <property type="entry name" value="alpha/beta hydrolase"/>
    <property type="match status" value="1"/>
</dbReference>
<dbReference type="HAMAP" id="MF_01047">
    <property type="entry name" value="UPF0227"/>
    <property type="match status" value="1"/>
</dbReference>
<dbReference type="InterPro" id="IPR029058">
    <property type="entry name" value="AB_hydrolase_fold"/>
</dbReference>
<dbReference type="InterPro" id="IPR022987">
    <property type="entry name" value="UPF0227"/>
</dbReference>
<dbReference type="InterPro" id="IPR008886">
    <property type="entry name" value="UPF0227/Esterase_YqiA"/>
</dbReference>
<dbReference type="NCBIfam" id="NF003431">
    <property type="entry name" value="PRK04940.1"/>
    <property type="match status" value="1"/>
</dbReference>
<dbReference type="PANTHER" id="PTHR35602">
    <property type="entry name" value="ESTERASE YQIA-RELATED"/>
    <property type="match status" value="1"/>
</dbReference>
<dbReference type="PANTHER" id="PTHR35602:SF2">
    <property type="entry name" value="UPF0227 PROTEIN YCFP"/>
    <property type="match status" value="1"/>
</dbReference>
<dbReference type="Pfam" id="PF05728">
    <property type="entry name" value="UPF0227"/>
    <property type="match status" value="1"/>
</dbReference>
<dbReference type="SUPFAM" id="SSF53474">
    <property type="entry name" value="alpha/beta-Hydrolases"/>
    <property type="match status" value="1"/>
</dbReference>
<sequence>MIIYLHGFDSTSPGNHEKVLQLQFIDDDVRFINYSTLHPKHDMQHLLKEVSKVIDQSDDPNPLICGVGLGGYWSERIGFLCGIKQVMFNPNLHPENTMAGRIDRPEEYEDIATKCVDQFRAKNQGRCLVILSKEDEIHDNTKTASELEKHYDIIWDESQSHKFKKISQHLQAMKEFKNT</sequence>
<evidence type="ECO:0000255" key="1">
    <source>
        <dbReference type="HAMAP-Rule" id="MF_01047"/>
    </source>
</evidence>